<organism>
    <name type="scientific">Xenopus tropicalis</name>
    <name type="common">Western clawed frog</name>
    <name type="synonym">Silurana tropicalis</name>
    <dbReference type="NCBI Taxonomy" id="8364"/>
    <lineage>
        <taxon>Eukaryota</taxon>
        <taxon>Metazoa</taxon>
        <taxon>Chordata</taxon>
        <taxon>Craniata</taxon>
        <taxon>Vertebrata</taxon>
        <taxon>Euteleostomi</taxon>
        <taxon>Amphibia</taxon>
        <taxon>Batrachia</taxon>
        <taxon>Anura</taxon>
        <taxon>Pipoidea</taxon>
        <taxon>Pipidae</taxon>
        <taxon>Xenopodinae</taxon>
        <taxon>Xenopus</taxon>
        <taxon>Silurana</taxon>
    </lineage>
</organism>
<proteinExistence type="evidence at transcript level"/>
<sequence length="278" mass="31211">MYLRKALIAGGSAAAAAAAILGAAAVGKSKGGPDLDILSVVPAATGQWDRNWDRREPISMVNLSKINGETGEEELQLHLNKHKPKATRHIFLIRHSQYKQDGKTDFDRVLTPLGREQADLTGKRLSSLGFKYNHIVYSTMTRAKETTEIISKYLPDVKKSSSDLLREGAPIRPEPQVCHWKPDFVYYEDGSRIEAAFRHFIHRADPKQEADSYEILICHANVIRYIVCRALQLPPEAWLRMFLNNGSISYLVIRPNGNVSLRMLGDSGFMPPEKISRT</sequence>
<keyword id="KW-0378">Hydrolase</keyword>
<keyword id="KW-0472">Membrane</keyword>
<keyword id="KW-0496">Mitochondrion</keyword>
<keyword id="KW-1000">Mitochondrion outer membrane</keyword>
<keyword id="KW-1210">Necrosis</keyword>
<keyword id="KW-1185">Reference proteome</keyword>
<keyword id="KW-0812">Transmembrane</keyword>
<keyword id="KW-1133">Transmembrane helix</keyword>
<evidence type="ECO:0000250" key="1"/>
<evidence type="ECO:0000255" key="2"/>
<evidence type="ECO:0000305" key="3"/>
<reference key="1">
    <citation type="submission" date="2004-06" db="EMBL/GenBank/DDBJ databases">
        <authorList>
            <consortium name="NIH - Xenopus Gene Collection (XGC) project"/>
        </authorList>
    </citation>
    <scope>NUCLEOTIDE SEQUENCE [LARGE SCALE MRNA]</scope>
    <source>
        <tissue>Embryo</tissue>
    </source>
</reference>
<feature type="chain" id="PRO_0000288787" description="Serine/threonine-protein phosphatase PGAM5, mitochondrial">
    <location>
        <begin position="1"/>
        <end position="278"/>
    </location>
</feature>
<feature type="transmembrane region" description="Helical" evidence="2">
    <location>
        <begin position="7"/>
        <end position="27"/>
    </location>
</feature>
<protein>
    <recommendedName>
        <fullName>Serine/threonine-protein phosphatase PGAM5, mitochondrial</fullName>
        <ecNumber>3.1.3.16</ecNumber>
    </recommendedName>
    <alternativeName>
        <fullName>Phosphoglycerate mutase family member 5</fullName>
    </alternativeName>
</protein>
<comment type="function">
    <text evidence="1">Displays phosphatase activity for serine/threonine residues. Has apparently no phosphoglycerate mutase activity. May be regulator of mitochondrial dynamics (By similarity). May be a central mediator for programmed necrosis (By similarity).</text>
</comment>
<comment type="catalytic activity">
    <reaction>
        <text>O-phospho-L-seryl-[protein] + H2O = L-seryl-[protein] + phosphate</text>
        <dbReference type="Rhea" id="RHEA:20629"/>
        <dbReference type="Rhea" id="RHEA-COMP:9863"/>
        <dbReference type="Rhea" id="RHEA-COMP:11604"/>
        <dbReference type="ChEBI" id="CHEBI:15377"/>
        <dbReference type="ChEBI" id="CHEBI:29999"/>
        <dbReference type="ChEBI" id="CHEBI:43474"/>
        <dbReference type="ChEBI" id="CHEBI:83421"/>
        <dbReference type="EC" id="3.1.3.16"/>
    </reaction>
</comment>
<comment type="catalytic activity">
    <reaction>
        <text>O-phospho-L-threonyl-[protein] + H2O = L-threonyl-[protein] + phosphate</text>
        <dbReference type="Rhea" id="RHEA:47004"/>
        <dbReference type="Rhea" id="RHEA-COMP:11060"/>
        <dbReference type="Rhea" id="RHEA-COMP:11605"/>
        <dbReference type="ChEBI" id="CHEBI:15377"/>
        <dbReference type="ChEBI" id="CHEBI:30013"/>
        <dbReference type="ChEBI" id="CHEBI:43474"/>
        <dbReference type="ChEBI" id="CHEBI:61977"/>
        <dbReference type="EC" id="3.1.3.16"/>
    </reaction>
</comment>
<comment type="subcellular location">
    <subcellularLocation>
        <location evidence="1">Mitochondrion outer membrane</location>
        <topology evidence="1">Single-pass membrane protein</topology>
    </subcellularLocation>
</comment>
<comment type="domain">
    <text evidence="1">The N-terminal 35 amino acids, including the potential transmembrane alpha-helix, function as a non-cleaved mitochondrial targeting sequence that targets the protein to the cytosolic side of the outer mitochondrial membrane.</text>
</comment>
<comment type="PTM">
    <text evidence="1">Phosphorylated by the RIPK1/RIPK3 complex under necrotic conditions. This phosphorylation increases PGAM5 phosphatase activity (By similarity).</text>
</comment>
<comment type="similarity">
    <text evidence="3">Belongs to the phosphoglycerate mutase family. BPG-dependent PGAM subfamily.</text>
</comment>
<gene>
    <name type="primary">pgam5</name>
</gene>
<accession>Q6GL33</accession>
<dbReference type="EC" id="3.1.3.16"/>
<dbReference type="EMBL" id="BC074682">
    <property type="protein sequence ID" value="AAH74682.1"/>
    <property type="molecule type" value="mRNA"/>
</dbReference>
<dbReference type="RefSeq" id="NP_001004858.1">
    <property type="nucleotide sequence ID" value="NM_001004858.1"/>
</dbReference>
<dbReference type="SMR" id="Q6GL33"/>
<dbReference type="FunCoup" id="Q6GL33">
    <property type="interactions" value="2183"/>
</dbReference>
<dbReference type="STRING" id="8364.ENSXETP00000037568"/>
<dbReference type="PaxDb" id="8364-ENSXETP00000051391"/>
<dbReference type="GeneID" id="448148"/>
<dbReference type="KEGG" id="xtr:448148"/>
<dbReference type="AGR" id="Xenbase:XB-GENE-948920"/>
<dbReference type="CTD" id="192111"/>
<dbReference type="Xenbase" id="XB-GENE-948920">
    <property type="gene designation" value="pgam5"/>
</dbReference>
<dbReference type="eggNOG" id="KOG4609">
    <property type="taxonomic scope" value="Eukaryota"/>
</dbReference>
<dbReference type="InParanoid" id="Q6GL33"/>
<dbReference type="OrthoDB" id="2118094at2759"/>
<dbReference type="Reactome" id="R-XTR-8934903">
    <property type="pathway name" value="Receptor Mediated Mitophagy"/>
</dbReference>
<dbReference type="Proteomes" id="UP000008143">
    <property type="component" value="Chromosome 1"/>
</dbReference>
<dbReference type="GO" id="GO:0005741">
    <property type="term" value="C:mitochondrial outer membrane"/>
    <property type="evidence" value="ECO:0007669"/>
    <property type="project" value="UniProtKB-SubCell"/>
</dbReference>
<dbReference type="GO" id="GO:0004722">
    <property type="term" value="F:protein serine/threonine phosphatase activity"/>
    <property type="evidence" value="ECO:0007669"/>
    <property type="project" value="UniProtKB-EC"/>
</dbReference>
<dbReference type="GO" id="GO:0012501">
    <property type="term" value="P:programmed cell death"/>
    <property type="evidence" value="ECO:0007669"/>
    <property type="project" value="UniProtKB-KW"/>
</dbReference>
<dbReference type="CDD" id="cd07067">
    <property type="entry name" value="HP_PGM_like"/>
    <property type="match status" value="1"/>
</dbReference>
<dbReference type="FunFam" id="3.40.50.1240:FF:000009">
    <property type="entry name" value="serine/threonine-protein phosphatase PGAM5, mitochondrial isoform X1"/>
    <property type="match status" value="1"/>
</dbReference>
<dbReference type="Gene3D" id="3.40.50.1240">
    <property type="entry name" value="Phosphoglycerate mutase-like"/>
    <property type="match status" value="1"/>
</dbReference>
<dbReference type="InterPro" id="IPR013078">
    <property type="entry name" value="His_Pase_superF_clade-1"/>
</dbReference>
<dbReference type="InterPro" id="IPR029033">
    <property type="entry name" value="His_PPase_superfam"/>
</dbReference>
<dbReference type="InterPro" id="IPR051021">
    <property type="entry name" value="Mito_Ser/Thr_phosphatase"/>
</dbReference>
<dbReference type="PANTHER" id="PTHR20935">
    <property type="entry name" value="PHOSPHOGLYCERATE MUTASE-RELATED"/>
    <property type="match status" value="1"/>
</dbReference>
<dbReference type="PANTHER" id="PTHR20935:SF0">
    <property type="entry name" value="SERINE_THREONINE-PROTEIN PHOSPHATASE PGAM5, MITOCHONDRIAL"/>
    <property type="match status" value="1"/>
</dbReference>
<dbReference type="Pfam" id="PF00300">
    <property type="entry name" value="His_Phos_1"/>
    <property type="match status" value="2"/>
</dbReference>
<dbReference type="SMART" id="SM00855">
    <property type="entry name" value="PGAM"/>
    <property type="match status" value="1"/>
</dbReference>
<dbReference type="SUPFAM" id="SSF53254">
    <property type="entry name" value="Phosphoglycerate mutase-like"/>
    <property type="match status" value="1"/>
</dbReference>
<name>PGAM5_XENTR</name>